<evidence type="ECO:0000255" key="1">
    <source>
        <dbReference type="HAMAP-Rule" id="MF_00453"/>
    </source>
</evidence>
<reference key="1">
    <citation type="submission" date="2005-09" db="EMBL/GenBank/DDBJ databases">
        <title>Complete sequence of chromosome 1 of Rhodobacter sphaeroides 2.4.1.</title>
        <authorList>
            <person name="Copeland A."/>
            <person name="Lucas S."/>
            <person name="Lapidus A."/>
            <person name="Barry K."/>
            <person name="Detter J.C."/>
            <person name="Glavina T."/>
            <person name="Hammon N."/>
            <person name="Israni S."/>
            <person name="Pitluck S."/>
            <person name="Richardson P."/>
            <person name="Mackenzie C."/>
            <person name="Choudhary M."/>
            <person name="Larimer F."/>
            <person name="Hauser L.J."/>
            <person name="Land M."/>
            <person name="Donohue T.J."/>
            <person name="Kaplan S."/>
        </authorList>
    </citation>
    <scope>NUCLEOTIDE SEQUENCE [LARGE SCALE GENOMIC DNA]</scope>
    <source>
        <strain>ATCC 17023 / DSM 158 / JCM 6121 / CCUG 31486 / LMG 2827 / NBRC 12203 / NCIMB 8253 / ATH 2.4.1.</strain>
    </source>
</reference>
<proteinExistence type="inferred from homology"/>
<sequence>MNFGRVNPAQTLDAQGITGLGEVHYNLIEPALVEAAVTRGEGRLGRGGAFLCSTGAFTGRSPKDKFVVRTPSVEDTIWWENNAPMDPAAFDRLHADMLEHMKGRTYFVQDLFAGADPELRLDVRMVTELAWHGLFIRHMLRRPERAELDSFVPDWTVINCPSFKADPERHGCRTDTVIVLNFERKLILIANTEYAGENKKSVFTLLNYILPGKGVMAMHCSANHALGDTDDAAVFFGLSGTGKTTLSADPSRTLIGDDEHGWSDRGTFNFEGGCYAKTINLSAEAEPEIYATTSKFATVVENMVYDEETLELDFNDDSLTANTRCAYPLDYISNASESGLGGHPKNVIMLTCDAFGVLPPIARLTPAQAMYHFLSGFTSKVAGTERGVTEPQPTFSTCFGAPFMPRRPEVYGKLLQEKIAKHGATCWLVNTGWTGGAYGTGKRMPIKATRALLTAALDGSLSGVQFRRDPNFGFEVPVDLHGVDAKLLDPRSTWADPAAYDQQAKKLVEMFANNFAQYVPFIDADVKAAAIG</sequence>
<comment type="function">
    <text evidence="1">Involved in the gluconeogenesis. Catalyzes the conversion of oxaloacetate (OAA) to phosphoenolpyruvate (PEP) through direct phosphoryl transfer between the nucleoside triphosphate and OAA.</text>
</comment>
<comment type="catalytic activity">
    <reaction evidence="1">
        <text>oxaloacetate + ATP = phosphoenolpyruvate + ADP + CO2</text>
        <dbReference type="Rhea" id="RHEA:18617"/>
        <dbReference type="ChEBI" id="CHEBI:16452"/>
        <dbReference type="ChEBI" id="CHEBI:16526"/>
        <dbReference type="ChEBI" id="CHEBI:30616"/>
        <dbReference type="ChEBI" id="CHEBI:58702"/>
        <dbReference type="ChEBI" id="CHEBI:456216"/>
        <dbReference type="EC" id="4.1.1.49"/>
    </reaction>
</comment>
<comment type="cofactor">
    <cofactor evidence="1">
        <name>Mn(2+)</name>
        <dbReference type="ChEBI" id="CHEBI:29035"/>
    </cofactor>
    <text evidence="1">Binds 1 Mn(2+) ion per subunit.</text>
</comment>
<comment type="pathway">
    <text evidence="1">Carbohydrate biosynthesis; gluconeogenesis.</text>
</comment>
<comment type="subcellular location">
    <subcellularLocation>
        <location evidence="1">Cytoplasm</location>
    </subcellularLocation>
</comment>
<comment type="similarity">
    <text evidence="1">Belongs to the phosphoenolpyruvate carboxykinase (ATP) family.</text>
</comment>
<name>PCKA_CERS4</name>
<feature type="chain" id="PRO_0000236937" description="Phosphoenolpyruvate carboxykinase (ATP)">
    <location>
        <begin position="1"/>
        <end position="532"/>
    </location>
</feature>
<feature type="binding site" evidence="1">
    <location>
        <position position="60"/>
    </location>
    <ligand>
        <name>substrate</name>
    </ligand>
</feature>
<feature type="binding site" evidence="1">
    <location>
        <position position="194"/>
    </location>
    <ligand>
        <name>substrate</name>
    </ligand>
</feature>
<feature type="binding site" evidence="1">
    <location>
        <position position="200"/>
    </location>
    <ligand>
        <name>ATP</name>
        <dbReference type="ChEBI" id="CHEBI:30616"/>
    </ligand>
</feature>
<feature type="binding site" evidence="1">
    <location>
        <position position="200"/>
    </location>
    <ligand>
        <name>Mn(2+)</name>
        <dbReference type="ChEBI" id="CHEBI:29035"/>
    </ligand>
</feature>
<feature type="binding site" evidence="1">
    <location>
        <position position="200"/>
    </location>
    <ligand>
        <name>substrate</name>
    </ligand>
</feature>
<feature type="binding site" evidence="1">
    <location>
        <position position="219"/>
    </location>
    <ligand>
        <name>ATP</name>
        <dbReference type="ChEBI" id="CHEBI:30616"/>
    </ligand>
</feature>
<feature type="binding site" evidence="1">
    <location>
        <position position="219"/>
    </location>
    <ligand>
        <name>Mn(2+)</name>
        <dbReference type="ChEBI" id="CHEBI:29035"/>
    </ligand>
</feature>
<feature type="binding site" evidence="1">
    <location>
        <begin position="237"/>
        <end position="245"/>
    </location>
    <ligand>
        <name>ATP</name>
        <dbReference type="ChEBI" id="CHEBI:30616"/>
    </ligand>
</feature>
<feature type="binding site" evidence="1">
    <location>
        <position position="258"/>
    </location>
    <ligand>
        <name>Mn(2+)</name>
        <dbReference type="ChEBI" id="CHEBI:29035"/>
    </ligand>
</feature>
<feature type="binding site" evidence="1">
    <location>
        <position position="286"/>
    </location>
    <ligand>
        <name>ATP</name>
        <dbReference type="ChEBI" id="CHEBI:30616"/>
    </ligand>
</feature>
<feature type="binding site" evidence="1">
    <location>
        <position position="324"/>
    </location>
    <ligand>
        <name>ATP</name>
        <dbReference type="ChEBI" id="CHEBI:30616"/>
    </ligand>
</feature>
<feature type="binding site" evidence="1">
    <location>
        <position position="324"/>
    </location>
    <ligand>
        <name>substrate</name>
    </ligand>
</feature>
<feature type="binding site" evidence="1">
    <location>
        <position position="449"/>
    </location>
    <ligand>
        <name>ATP</name>
        <dbReference type="ChEBI" id="CHEBI:30616"/>
    </ligand>
</feature>
<protein>
    <recommendedName>
        <fullName evidence="1">Phosphoenolpyruvate carboxykinase (ATP)</fullName>
        <shortName evidence="1">PCK</shortName>
        <shortName evidence="1">PEP carboxykinase</shortName>
        <shortName evidence="1">PEPCK</shortName>
        <ecNumber evidence="1">4.1.1.49</ecNumber>
    </recommendedName>
</protein>
<accession>Q3J5V6</accession>
<gene>
    <name evidence="1" type="primary">pckA</name>
    <name type="ordered locus">RHOS4_02600</name>
    <name type="ordered locus">RSP_1680</name>
</gene>
<keyword id="KW-0067">ATP-binding</keyword>
<keyword id="KW-0963">Cytoplasm</keyword>
<keyword id="KW-0210">Decarboxylase</keyword>
<keyword id="KW-0312">Gluconeogenesis</keyword>
<keyword id="KW-0456">Lyase</keyword>
<keyword id="KW-0464">Manganese</keyword>
<keyword id="KW-0479">Metal-binding</keyword>
<keyword id="KW-0547">Nucleotide-binding</keyword>
<keyword id="KW-1185">Reference proteome</keyword>
<dbReference type="EC" id="4.1.1.49" evidence="1"/>
<dbReference type="EMBL" id="CP000143">
    <property type="protein sequence ID" value="ABA77828.1"/>
    <property type="molecule type" value="Genomic_DNA"/>
</dbReference>
<dbReference type="RefSeq" id="WP_002722428.1">
    <property type="nucleotide sequence ID" value="NZ_CP030271.1"/>
</dbReference>
<dbReference type="RefSeq" id="YP_351729.1">
    <property type="nucleotide sequence ID" value="NC_007493.2"/>
</dbReference>
<dbReference type="SMR" id="Q3J5V6"/>
<dbReference type="STRING" id="272943.RSP_1680"/>
<dbReference type="EnsemblBacteria" id="ABA77828">
    <property type="protein sequence ID" value="ABA77828"/>
    <property type="gene ID" value="RSP_1680"/>
</dbReference>
<dbReference type="GeneID" id="3717985"/>
<dbReference type="KEGG" id="rsp:RSP_1680"/>
<dbReference type="PATRIC" id="fig|272943.9.peg.557"/>
<dbReference type="eggNOG" id="COG1866">
    <property type="taxonomic scope" value="Bacteria"/>
</dbReference>
<dbReference type="OrthoDB" id="9806325at2"/>
<dbReference type="PhylomeDB" id="Q3J5V6"/>
<dbReference type="UniPathway" id="UPA00138"/>
<dbReference type="Proteomes" id="UP000002703">
    <property type="component" value="Chromosome 1"/>
</dbReference>
<dbReference type="GO" id="GO:0005829">
    <property type="term" value="C:cytosol"/>
    <property type="evidence" value="ECO:0007669"/>
    <property type="project" value="TreeGrafter"/>
</dbReference>
<dbReference type="GO" id="GO:0005524">
    <property type="term" value="F:ATP binding"/>
    <property type="evidence" value="ECO:0007669"/>
    <property type="project" value="UniProtKB-UniRule"/>
</dbReference>
<dbReference type="GO" id="GO:0046872">
    <property type="term" value="F:metal ion binding"/>
    <property type="evidence" value="ECO:0007669"/>
    <property type="project" value="UniProtKB-KW"/>
</dbReference>
<dbReference type="GO" id="GO:0004612">
    <property type="term" value="F:phosphoenolpyruvate carboxykinase (ATP) activity"/>
    <property type="evidence" value="ECO:0007669"/>
    <property type="project" value="UniProtKB-UniRule"/>
</dbReference>
<dbReference type="GO" id="GO:0006094">
    <property type="term" value="P:gluconeogenesis"/>
    <property type="evidence" value="ECO:0007669"/>
    <property type="project" value="UniProtKB-UniRule"/>
</dbReference>
<dbReference type="CDD" id="cd00484">
    <property type="entry name" value="PEPCK_ATP"/>
    <property type="match status" value="1"/>
</dbReference>
<dbReference type="Gene3D" id="3.90.228.20">
    <property type="match status" value="1"/>
</dbReference>
<dbReference type="Gene3D" id="3.40.449.10">
    <property type="entry name" value="Phosphoenolpyruvate Carboxykinase, domain 1"/>
    <property type="match status" value="1"/>
</dbReference>
<dbReference type="Gene3D" id="2.170.8.10">
    <property type="entry name" value="Phosphoenolpyruvate Carboxykinase, domain 2"/>
    <property type="match status" value="1"/>
</dbReference>
<dbReference type="HAMAP" id="MF_00453">
    <property type="entry name" value="PEPCK_ATP"/>
    <property type="match status" value="1"/>
</dbReference>
<dbReference type="InterPro" id="IPR001272">
    <property type="entry name" value="PEP_carboxykinase_ATP"/>
</dbReference>
<dbReference type="InterPro" id="IPR013035">
    <property type="entry name" value="PEP_carboxykinase_C"/>
</dbReference>
<dbReference type="InterPro" id="IPR008210">
    <property type="entry name" value="PEP_carboxykinase_N"/>
</dbReference>
<dbReference type="NCBIfam" id="TIGR00224">
    <property type="entry name" value="pckA"/>
    <property type="match status" value="1"/>
</dbReference>
<dbReference type="NCBIfam" id="NF006820">
    <property type="entry name" value="PRK09344.1-2"/>
    <property type="match status" value="1"/>
</dbReference>
<dbReference type="NCBIfam" id="NF006821">
    <property type="entry name" value="PRK09344.1-3"/>
    <property type="match status" value="1"/>
</dbReference>
<dbReference type="NCBIfam" id="NF006822">
    <property type="entry name" value="PRK09344.1-4"/>
    <property type="match status" value="1"/>
</dbReference>
<dbReference type="PANTHER" id="PTHR30031:SF0">
    <property type="entry name" value="PHOSPHOENOLPYRUVATE CARBOXYKINASE (ATP)"/>
    <property type="match status" value="1"/>
</dbReference>
<dbReference type="PANTHER" id="PTHR30031">
    <property type="entry name" value="PHOSPHOENOLPYRUVATE CARBOXYKINASE ATP"/>
    <property type="match status" value="1"/>
</dbReference>
<dbReference type="Pfam" id="PF01293">
    <property type="entry name" value="PEPCK_ATP"/>
    <property type="match status" value="1"/>
</dbReference>
<dbReference type="PIRSF" id="PIRSF006294">
    <property type="entry name" value="PEP_crbxkin"/>
    <property type="match status" value="1"/>
</dbReference>
<dbReference type="SUPFAM" id="SSF68923">
    <property type="entry name" value="PEP carboxykinase N-terminal domain"/>
    <property type="match status" value="1"/>
</dbReference>
<dbReference type="SUPFAM" id="SSF53795">
    <property type="entry name" value="PEP carboxykinase-like"/>
    <property type="match status" value="1"/>
</dbReference>
<organism>
    <name type="scientific">Cereibacter sphaeroides (strain ATCC 17023 / DSM 158 / JCM 6121 / CCUG 31486 / LMG 2827 / NBRC 12203 / NCIMB 8253 / ATH 2.4.1.)</name>
    <name type="common">Rhodobacter sphaeroides</name>
    <dbReference type="NCBI Taxonomy" id="272943"/>
    <lineage>
        <taxon>Bacteria</taxon>
        <taxon>Pseudomonadati</taxon>
        <taxon>Pseudomonadota</taxon>
        <taxon>Alphaproteobacteria</taxon>
        <taxon>Rhodobacterales</taxon>
        <taxon>Paracoccaceae</taxon>
        <taxon>Cereibacter</taxon>
    </lineage>
</organism>